<accession>B1IYH8</accession>
<sequence>MYQDKILVRQLGLQPYEPISQAMHEFTDTRDDSTLDEIWLVEHYPVFTQGQAGKAEHILMPGDIPVIQSDRGGQVTYHGPGQQVMYVLLNLKRRKLGVRELVTLLEQTVVNTLAELGIEAHPRADAPGVYVGEKKICSLGLRIRRGCSFHGLALNVNMDLSPFLRINPCGYAGMEMAKISQWKPEATTNNIAPRLLENILALLNNPDFEYITA</sequence>
<keyword id="KW-0012">Acyltransferase</keyword>
<keyword id="KW-0963">Cytoplasm</keyword>
<keyword id="KW-0808">Transferase</keyword>
<comment type="function">
    <text evidence="1">Catalyzes the transfer of endogenously produced octanoic acid from octanoyl-acyl-carrier-protein onto the lipoyl domains of lipoate-dependent enzymes. Lipoyl-ACP can also act as a substrate although octanoyl-ACP is likely to be the physiological substrate.</text>
</comment>
<comment type="catalytic activity">
    <reaction evidence="1">
        <text>octanoyl-[ACP] + L-lysyl-[protein] = N(6)-octanoyl-L-lysyl-[protein] + holo-[ACP] + H(+)</text>
        <dbReference type="Rhea" id="RHEA:17665"/>
        <dbReference type="Rhea" id="RHEA-COMP:9636"/>
        <dbReference type="Rhea" id="RHEA-COMP:9685"/>
        <dbReference type="Rhea" id="RHEA-COMP:9752"/>
        <dbReference type="Rhea" id="RHEA-COMP:9928"/>
        <dbReference type="ChEBI" id="CHEBI:15378"/>
        <dbReference type="ChEBI" id="CHEBI:29969"/>
        <dbReference type="ChEBI" id="CHEBI:64479"/>
        <dbReference type="ChEBI" id="CHEBI:78463"/>
        <dbReference type="ChEBI" id="CHEBI:78809"/>
        <dbReference type="EC" id="2.3.1.181"/>
    </reaction>
</comment>
<comment type="pathway">
    <text evidence="1">Protein modification; protein lipoylation via endogenous pathway; protein N(6)-(lipoyl)lysine from octanoyl-[acyl-carrier-protein]: step 1/2.</text>
</comment>
<comment type="subcellular location">
    <subcellularLocation>
        <location evidence="1">Cytoplasm</location>
    </subcellularLocation>
</comment>
<comment type="miscellaneous">
    <text evidence="1">In the reaction, the free carboxyl group of octanoic acid is attached via an amide linkage to the epsilon-amino group of a specific lysine residue of lipoyl domains of lipoate-dependent enzymes.</text>
</comment>
<comment type="similarity">
    <text evidence="1">Belongs to the LipB family.</text>
</comment>
<feature type="chain" id="PRO_1000074001" description="Octanoyltransferase">
    <location>
        <begin position="1"/>
        <end position="213"/>
    </location>
</feature>
<feature type="domain" description="BPL/LPL catalytic" evidence="2">
    <location>
        <begin position="32"/>
        <end position="207"/>
    </location>
</feature>
<feature type="active site" description="Acyl-thioester intermediate" evidence="1">
    <location>
        <position position="169"/>
    </location>
</feature>
<feature type="binding site" evidence="1">
    <location>
        <begin position="71"/>
        <end position="78"/>
    </location>
    <ligand>
        <name>substrate</name>
    </ligand>
</feature>
<feature type="binding site" evidence="1">
    <location>
        <begin position="138"/>
        <end position="140"/>
    </location>
    <ligand>
        <name>substrate</name>
    </ligand>
</feature>
<feature type="binding site" evidence="1">
    <location>
        <begin position="151"/>
        <end position="153"/>
    </location>
    <ligand>
        <name>substrate</name>
    </ligand>
</feature>
<feature type="site" description="Lowers pKa of active site Cys" evidence="1">
    <location>
        <position position="135"/>
    </location>
</feature>
<protein>
    <recommendedName>
        <fullName evidence="1">Octanoyltransferase</fullName>
        <ecNumber evidence="1">2.3.1.181</ecNumber>
    </recommendedName>
    <alternativeName>
        <fullName evidence="1">Lipoate-protein ligase B</fullName>
    </alternativeName>
    <alternativeName>
        <fullName evidence="1">Lipoyl/octanoyl transferase</fullName>
    </alternativeName>
    <alternativeName>
        <fullName evidence="1">Octanoyl-[acyl-carrier-protein]-protein N-octanoyltransferase</fullName>
    </alternativeName>
</protein>
<name>LIPB_ECOLC</name>
<proteinExistence type="inferred from homology"/>
<evidence type="ECO:0000255" key="1">
    <source>
        <dbReference type="HAMAP-Rule" id="MF_00013"/>
    </source>
</evidence>
<evidence type="ECO:0000255" key="2">
    <source>
        <dbReference type="PROSITE-ProRule" id="PRU01067"/>
    </source>
</evidence>
<organism>
    <name type="scientific">Escherichia coli (strain ATCC 8739 / DSM 1576 / NBRC 3972 / NCIMB 8545 / WDCM 00012 / Crooks)</name>
    <dbReference type="NCBI Taxonomy" id="481805"/>
    <lineage>
        <taxon>Bacteria</taxon>
        <taxon>Pseudomonadati</taxon>
        <taxon>Pseudomonadota</taxon>
        <taxon>Gammaproteobacteria</taxon>
        <taxon>Enterobacterales</taxon>
        <taxon>Enterobacteriaceae</taxon>
        <taxon>Escherichia</taxon>
    </lineage>
</organism>
<reference key="1">
    <citation type="submission" date="2008-02" db="EMBL/GenBank/DDBJ databases">
        <title>Complete sequence of Escherichia coli C str. ATCC 8739.</title>
        <authorList>
            <person name="Copeland A."/>
            <person name="Lucas S."/>
            <person name="Lapidus A."/>
            <person name="Glavina del Rio T."/>
            <person name="Dalin E."/>
            <person name="Tice H."/>
            <person name="Bruce D."/>
            <person name="Goodwin L."/>
            <person name="Pitluck S."/>
            <person name="Kiss H."/>
            <person name="Brettin T."/>
            <person name="Detter J.C."/>
            <person name="Han C."/>
            <person name="Kuske C.R."/>
            <person name="Schmutz J."/>
            <person name="Larimer F."/>
            <person name="Land M."/>
            <person name="Hauser L."/>
            <person name="Kyrpides N."/>
            <person name="Mikhailova N."/>
            <person name="Ingram L."/>
            <person name="Richardson P."/>
        </authorList>
    </citation>
    <scope>NUCLEOTIDE SEQUENCE [LARGE SCALE GENOMIC DNA]</scope>
    <source>
        <strain>ATCC 8739 / DSM 1576 / NBRC 3972 / NCIMB 8545 / WDCM 00012 / Crooks</strain>
    </source>
</reference>
<dbReference type="EC" id="2.3.1.181" evidence="1"/>
<dbReference type="EMBL" id="CP000946">
    <property type="protein sequence ID" value="ACA78640.1"/>
    <property type="molecule type" value="Genomic_DNA"/>
</dbReference>
<dbReference type="RefSeq" id="WP_000284027.1">
    <property type="nucleotide sequence ID" value="NZ_MTFT01000005.1"/>
</dbReference>
<dbReference type="SMR" id="B1IYH8"/>
<dbReference type="GeneID" id="93776852"/>
<dbReference type="KEGG" id="ecl:EcolC_3015"/>
<dbReference type="HOGENOM" id="CLU_035168_3_1_6"/>
<dbReference type="UniPathway" id="UPA00538">
    <property type="reaction ID" value="UER00592"/>
</dbReference>
<dbReference type="GO" id="GO:0005737">
    <property type="term" value="C:cytoplasm"/>
    <property type="evidence" value="ECO:0007669"/>
    <property type="project" value="UniProtKB-SubCell"/>
</dbReference>
<dbReference type="GO" id="GO:0033819">
    <property type="term" value="F:lipoyl(octanoyl) transferase activity"/>
    <property type="evidence" value="ECO:0007669"/>
    <property type="project" value="UniProtKB-EC"/>
</dbReference>
<dbReference type="GO" id="GO:0036211">
    <property type="term" value="P:protein modification process"/>
    <property type="evidence" value="ECO:0007669"/>
    <property type="project" value="InterPro"/>
</dbReference>
<dbReference type="CDD" id="cd16444">
    <property type="entry name" value="LipB"/>
    <property type="match status" value="1"/>
</dbReference>
<dbReference type="FunFam" id="3.30.930.10:FF:000020">
    <property type="entry name" value="Octanoyltransferase"/>
    <property type="match status" value="1"/>
</dbReference>
<dbReference type="Gene3D" id="3.30.930.10">
    <property type="entry name" value="Bira Bifunctional Protein, Domain 2"/>
    <property type="match status" value="1"/>
</dbReference>
<dbReference type="HAMAP" id="MF_00013">
    <property type="entry name" value="LipB"/>
    <property type="match status" value="1"/>
</dbReference>
<dbReference type="InterPro" id="IPR045864">
    <property type="entry name" value="aa-tRNA-synth_II/BPL/LPL"/>
</dbReference>
<dbReference type="InterPro" id="IPR004143">
    <property type="entry name" value="BPL_LPL_catalytic"/>
</dbReference>
<dbReference type="InterPro" id="IPR000544">
    <property type="entry name" value="Octanoyltransferase"/>
</dbReference>
<dbReference type="InterPro" id="IPR020605">
    <property type="entry name" value="Octanoyltransferase_CS"/>
</dbReference>
<dbReference type="NCBIfam" id="TIGR00214">
    <property type="entry name" value="lipB"/>
    <property type="match status" value="1"/>
</dbReference>
<dbReference type="NCBIfam" id="NF010922">
    <property type="entry name" value="PRK14342.1"/>
    <property type="match status" value="1"/>
</dbReference>
<dbReference type="PANTHER" id="PTHR10993:SF7">
    <property type="entry name" value="LIPOYLTRANSFERASE 2, MITOCHONDRIAL-RELATED"/>
    <property type="match status" value="1"/>
</dbReference>
<dbReference type="PANTHER" id="PTHR10993">
    <property type="entry name" value="OCTANOYLTRANSFERASE"/>
    <property type="match status" value="1"/>
</dbReference>
<dbReference type="Pfam" id="PF21948">
    <property type="entry name" value="LplA-B_cat"/>
    <property type="match status" value="1"/>
</dbReference>
<dbReference type="PIRSF" id="PIRSF016262">
    <property type="entry name" value="LPLase"/>
    <property type="match status" value="1"/>
</dbReference>
<dbReference type="SUPFAM" id="SSF55681">
    <property type="entry name" value="Class II aaRS and biotin synthetases"/>
    <property type="match status" value="1"/>
</dbReference>
<dbReference type="PROSITE" id="PS51733">
    <property type="entry name" value="BPL_LPL_CATALYTIC"/>
    <property type="match status" value="1"/>
</dbReference>
<dbReference type="PROSITE" id="PS01313">
    <property type="entry name" value="LIPB"/>
    <property type="match status" value="1"/>
</dbReference>
<gene>
    <name evidence="1" type="primary">lipB</name>
    <name type="ordered locus">EcolC_3015</name>
</gene>